<accession>P14071</accession>
<comment type="function">
    <text>Rubredoxin is a small nonheme, iron protein lacking acid-labile sulfide. Its single Fe, chelated to 4 Cys, functions as an electron acceptor and may also stabilize the conformation of the molecule.</text>
</comment>
<comment type="cofactor">
    <cofactor evidence="1">
        <name>Fe(3+)</name>
        <dbReference type="ChEBI" id="CHEBI:29034"/>
    </cofactor>
    <text evidence="1">Binds 1 Fe(3+) ion per subunit.</text>
</comment>
<comment type="similarity">
    <text evidence="3">Belongs to the rubredoxin family.</text>
</comment>
<evidence type="ECO:0000250" key="1"/>
<evidence type="ECO:0000255" key="2">
    <source>
        <dbReference type="PROSITE-ProRule" id="PRU00241"/>
    </source>
</evidence>
<evidence type="ECO:0000305" key="3"/>
<keyword id="KW-0903">Direct protein sequencing</keyword>
<keyword id="KW-0249">Electron transport</keyword>
<keyword id="KW-0408">Iron</keyword>
<keyword id="KW-0479">Metal-binding</keyword>
<keyword id="KW-0813">Transport</keyword>
<organism>
    <name type="scientific">Butyribacterium methylotrophicum</name>
    <dbReference type="NCBI Taxonomy" id="1487"/>
    <lineage>
        <taxon>Bacteria</taxon>
        <taxon>Bacillati</taxon>
        <taxon>Bacillota</taxon>
        <taxon>Clostridia</taxon>
        <taxon>Eubacteriales</taxon>
        <taxon>Clostridiaceae</taxon>
        <taxon>Clostridium</taxon>
    </lineage>
</organism>
<sequence length="53" mass="5672">MQKYVCDICGYVYDPAVGDPDNGVAPGTAFADLPEDWVCPECGVSKDEFSPEA</sequence>
<name>RUBR_BUTME</name>
<protein>
    <recommendedName>
        <fullName>Rubredoxin</fullName>
        <shortName>Rd</shortName>
    </recommendedName>
</protein>
<reference key="1">
    <citation type="journal article" date="1989" name="J. Biochem.">
        <title>Ferredoxin and rubredoxin from Butyribacterium methylotrophicum: complete primary structures and construction of phylogenetic trees.</title>
        <authorList>
            <person name="Saeki K."/>
            <person name="Yao Y."/>
            <person name="Wakabayashi S."/>
            <person name="Shen G.-J."/>
            <person name="Zeikus J.G."/>
            <person name="Matsubara H."/>
        </authorList>
    </citation>
    <scope>PROTEIN SEQUENCE</scope>
</reference>
<dbReference type="PIR" id="JU0127">
    <property type="entry name" value="JU0127"/>
</dbReference>
<dbReference type="SMR" id="P14071"/>
<dbReference type="GO" id="GO:0009055">
    <property type="term" value="F:electron transfer activity"/>
    <property type="evidence" value="ECO:0007669"/>
    <property type="project" value="InterPro"/>
</dbReference>
<dbReference type="GO" id="GO:0005506">
    <property type="term" value="F:iron ion binding"/>
    <property type="evidence" value="ECO:0007669"/>
    <property type="project" value="InterPro"/>
</dbReference>
<dbReference type="GO" id="GO:0043448">
    <property type="term" value="P:alkane catabolic process"/>
    <property type="evidence" value="ECO:0007669"/>
    <property type="project" value="TreeGrafter"/>
</dbReference>
<dbReference type="CDD" id="cd00730">
    <property type="entry name" value="rubredoxin"/>
    <property type="match status" value="1"/>
</dbReference>
<dbReference type="FunFam" id="2.20.28.10:FF:000001">
    <property type="entry name" value="Rubredoxin"/>
    <property type="match status" value="1"/>
</dbReference>
<dbReference type="Gene3D" id="2.20.28.10">
    <property type="match status" value="1"/>
</dbReference>
<dbReference type="InterPro" id="IPR024922">
    <property type="entry name" value="Rubredoxin"/>
</dbReference>
<dbReference type="InterPro" id="IPR024934">
    <property type="entry name" value="Rubredoxin-like_dom"/>
</dbReference>
<dbReference type="InterPro" id="IPR024935">
    <property type="entry name" value="Rubredoxin_dom"/>
</dbReference>
<dbReference type="InterPro" id="IPR050526">
    <property type="entry name" value="Rubredoxin_ET"/>
</dbReference>
<dbReference type="InterPro" id="IPR018527">
    <property type="entry name" value="Rubredoxin_Fe_BS"/>
</dbReference>
<dbReference type="NCBIfam" id="NF045768">
    <property type="entry name" value="RubredRD"/>
    <property type="match status" value="1"/>
</dbReference>
<dbReference type="PANTHER" id="PTHR47627">
    <property type="entry name" value="RUBREDOXIN"/>
    <property type="match status" value="1"/>
</dbReference>
<dbReference type="PANTHER" id="PTHR47627:SF1">
    <property type="entry name" value="RUBREDOXIN-1-RELATED"/>
    <property type="match status" value="1"/>
</dbReference>
<dbReference type="Pfam" id="PF00301">
    <property type="entry name" value="Rubredoxin"/>
    <property type="match status" value="1"/>
</dbReference>
<dbReference type="PIRSF" id="PIRSF000071">
    <property type="entry name" value="Rubredoxin"/>
    <property type="match status" value="1"/>
</dbReference>
<dbReference type="PRINTS" id="PR00163">
    <property type="entry name" value="RUBREDOXIN"/>
</dbReference>
<dbReference type="SUPFAM" id="SSF57802">
    <property type="entry name" value="Rubredoxin-like"/>
    <property type="match status" value="1"/>
</dbReference>
<dbReference type="PROSITE" id="PS00202">
    <property type="entry name" value="RUBREDOXIN"/>
    <property type="match status" value="1"/>
</dbReference>
<dbReference type="PROSITE" id="PS50903">
    <property type="entry name" value="RUBREDOXIN_LIKE"/>
    <property type="match status" value="1"/>
</dbReference>
<proteinExistence type="evidence at protein level"/>
<feature type="chain" id="PRO_0000135024" description="Rubredoxin">
    <location>
        <begin position="1"/>
        <end position="53"/>
    </location>
</feature>
<feature type="domain" description="Rubredoxin-like" evidence="2">
    <location>
        <begin position="1"/>
        <end position="53"/>
    </location>
</feature>
<feature type="binding site" evidence="2">
    <location>
        <position position="6"/>
    </location>
    <ligand>
        <name>Fe cation</name>
        <dbReference type="ChEBI" id="CHEBI:24875"/>
    </ligand>
</feature>
<feature type="binding site" evidence="2">
    <location>
        <position position="9"/>
    </location>
    <ligand>
        <name>Fe cation</name>
        <dbReference type="ChEBI" id="CHEBI:24875"/>
    </ligand>
</feature>
<feature type="binding site" evidence="2">
    <location>
        <position position="39"/>
    </location>
    <ligand>
        <name>Fe cation</name>
        <dbReference type="ChEBI" id="CHEBI:24875"/>
    </ligand>
</feature>
<feature type="binding site" evidence="2">
    <location>
        <position position="42"/>
    </location>
    <ligand>
        <name>Fe cation</name>
        <dbReference type="ChEBI" id="CHEBI:24875"/>
    </ligand>
</feature>